<proteinExistence type="evidence at protein level"/>
<evidence type="ECO:0000269" key="1">
    <source ref="1"/>
</evidence>
<evidence type="ECO:0000305" key="2"/>
<reference evidence="2" key="1">
    <citation type="submission" date="2010-06" db="UniProtKB">
        <authorList>
            <person name="Radha A."/>
            <person name="Pradeep K.G."/>
            <person name="Sreesha S."/>
            <person name="Akbarsha M.A."/>
            <person name="Oommen O.V."/>
        </authorList>
    </citation>
    <scope>PROTEIN SEQUENCE</scope>
    <scope>SUBCELLULAR LOCATION</scope>
    <source>
        <tissue>Muellerian gland</tissue>
    </source>
</reference>
<dbReference type="GO" id="GO:0005576">
    <property type="term" value="C:extracellular region"/>
    <property type="evidence" value="ECO:0007669"/>
    <property type="project" value="UniProtKB-SubCell"/>
</dbReference>
<feature type="chain" id="PRO_0000397238" description="Unknown protein 1">
    <location>
        <begin position="1"/>
        <end position="15" status="greater than"/>
    </location>
</feature>
<feature type="non-terminal residue">
    <location>
        <position position="15"/>
    </location>
</feature>
<keyword id="KW-0903">Direct protein sequencing</keyword>
<keyword id="KW-0964">Secreted</keyword>
<organism>
    <name type="scientific">Ichthyophis tricolor</name>
    <name type="common">Three-colored caecilian</name>
    <name type="synonym">Ichthyophis glutinosus tricolor</name>
    <dbReference type="NCBI Taxonomy" id="194527"/>
    <lineage>
        <taxon>Eukaryota</taxon>
        <taxon>Metazoa</taxon>
        <taxon>Chordata</taxon>
        <taxon>Craniata</taxon>
        <taxon>Vertebrata</taxon>
        <taxon>Euteleostomi</taxon>
        <taxon>Amphibia</taxon>
        <taxon>Gymnophiona</taxon>
        <taxon>Ichthyophiidae</taxon>
        <taxon>Ichthyophis</taxon>
    </lineage>
</organism>
<sequence length="15" mass="2304">DWTYTTWLWWWWWWT</sequence>
<accession>P86690</accession>
<comment type="subcellular location">
    <subcellularLocation>
        <location evidence="1">Secreted</location>
    </subcellularLocation>
</comment>
<protein>
    <recommendedName>
        <fullName>Unknown protein 1</fullName>
    </recommendedName>
</protein>
<name>UP1_ICHTR</name>